<evidence type="ECO:0000255" key="1">
    <source>
        <dbReference type="HAMAP-Rule" id="MF_01309"/>
    </source>
</evidence>
<evidence type="ECO:0000256" key="2">
    <source>
        <dbReference type="SAM" id="MobiDB-lite"/>
    </source>
</evidence>
<evidence type="ECO:0000305" key="3"/>
<feature type="chain" id="PRO_0000293933" description="Small ribosomal subunit protein uS3">
    <location>
        <begin position="1"/>
        <end position="279"/>
    </location>
</feature>
<feature type="domain" description="KH type-2" evidence="1">
    <location>
        <begin position="17"/>
        <end position="86"/>
    </location>
</feature>
<feature type="region of interest" description="Disordered" evidence="2">
    <location>
        <begin position="206"/>
        <end position="279"/>
    </location>
</feature>
<feature type="compositionally biased region" description="Low complexity" evidence="2">
    <location>
        <begin position="206"/>
        <end position="233"/>
    </location>
</feature>
<feature type="compositionally biased region" description="Low complexity" evidence="2">
    <location>
        <begin position="241"/>
        <end position="252"/>
    </location>
</feature>
<comment type="function">
    <text evidence="1">Binds the lower part of the 30S subunit head.</text>
</comment>
<comment type="subunit">
    <text evidence="1">Part of the 30S ribosomal subunit.</text>
</comment>
<comment type="similarity">
    <text evidence="1">Belongs to the universal ribosomal protein uS3 family.</text>
</comment>
<reference key="1">
    <citation type="journal article" date="2006" name="Science">
        <title>Genome of rice cluster I archaea -- the key methane producers in the rice rhizosphere.</title>
        <authorList>
            <person name="Erkel C."/>
            <person name="Kube M."/>
            <person name="Reinhardt R."/>
            <person name="Liesack W."/>
        </authorList>
    </citation>
    <scope>NUCLEOTIDE SEQUENCE [LARGE SCALE GENOMIC DNA]</scope>
    <source>
        <strain>DSM 22066 / NBRC 105507 / MRE50</strain>
    </source>
</reference>
<accession>Q0W1Y3</accession>
<protein>
    <recommendedName>
        <fullName evidence="1">Small ribosomal subunit protein uS3</fullName>
    </recommendedName>
    <alternativeName>
        <fullName evidence="3">30S ribosomal protein S3</fullName>
    </alternativeName>
</protein>
<sequence>MAIEKKFVQEGFKKAMVDEYFLEKLERAGYGGMEINRTPMGTQITLKAEKPGMIIGKAGKSIRRYTKEMDMRFKMDNPQIDVQEVKKPELNAQMMATRLANALERGWYFRKAGQSTLQRIMDSGAMGCEVIIAGKLTGARKRREKFIAGYIKHCGKPVEELVDVGYARAKKKLGIIGVKVRIMPPEAVLPDQITIEAAQAAAPAPAEKKSPAAGAEPAKEAAAVPAPAESTAAEVEKIIAESEAAEAVTPEGAEGDEKAAAAKKQPKKKVVKTDGDSQS</sequence>
<gene>
    <name evidence="1" type="primary">rps3</name>
    <name type="ordered locus">UNCMA_06460</name>
    <name type="ORF">RCIX2548</name>
</gene>
<dbReference type="EMBL" id="AM114193">
    <property type="protein sequence ID" value="CAJ37610.1"/>
    <property type="molecule type" value="Genomic_DNA"/>
</dbReference>
<dbReference type="RefSeq" id="WP_012034975.1">
    <property type="nucleotide sequence ID" value="NC_009464.1"/>
</dbReference>
<dbReference type="SMR" id="Q0W1Y3"/>
<dbReference type="STRING" id="351160.RCIX2548"/>
<dbReference type="GeneID" id="5144565"/>
<dbReference type="KEGG" id="rci:RCIX2548"/>
<dbReference type="PATRIC" id="fig|351160.9.peg.673"/>
<dbReference type="eggNOG" id="arCOG04097">
    <property type="taxonomic scope" value="Archaea"/>
</dbReference>
<dbReference type="OrthoDB" id="9126at2157"/>
<dbReference type="Proteomes" id="UP000000663">
    <property type="component" value="Chromosome"/>
</dbReference>
<dbReference type="GO" id="GO:0022627">
    <property type="term" value="C:cytosolic small ribosomal subunit"/>
    <property type="evidence" value="ECO:0007669"/>
    <property type="project" value="TreeGrafter"/>
</dbReference>
<dbReference type="GO" id="GO:0019843">
    <property type="term" value="F:rRNA binding"/>
    <property type="evidence" value="ECO:0007669"/>
    <property type="project" value="UniProtKB-UniRule"/>
</dbReference>
<dbReference type="GO" id="GO:0003735">
    <property type="term" value="F:structural constituent of ribosome"/>
    <property type="evidence" value="ECO:0007669"/>
    <property type="project" value="InterPro"/>
</dbReference>
<dbReference type="GO" id="GO:0006412">
    <property type="term" value="P:translation"/>
    <property type="evidence" value="ECO:0007669"/>
    <property type="project" value="UniProtKB-UniRule"/>
</dbReference>
<dbReference type="CDD" id="cd02411">
    <property type="entry name" value="KH-II_30S_S3_arch"/>
    <property type="match status" value="1"/>
</dbReference>
<dbReference type="FunFam" id="3.30.300.20:FF:000001">
    <property type="entry name" value="30S ribosomal protein S3"/>
    <property type="match status" value="1"/>
</dbReference>
<dbReference type="Gene3D" id="3.30.300.20">
    <property type="match status" value="1"/>
</dbReference>
<dbReference type="Gene3D" id="3.30.1140.32">
    <property type="entry name" value="Ribosomal protein S3, C-terminal domain"/>
    <property type="match status" value="1"/>
</dbReference>
<dbReference type="HAMAP" id="MF_01309_A">
    <property type="entry name" value="Ribosomal_uS3_A"/>
    <property type="match status" value="1"/>
</dbReference>
<dbReference type="InterPro" id="IPR004087">
    <property type="entry name" value="KH_dom"/>
</dbReference>
<dbReference type="InterPro" id="IPR015946">
    <property type="entry name" value="KH_dom-like_a/b"/>
</dbReference>
<dbReference type="InterPro" id="IPR004044">
    <property type="entry name" value="KH_dom_type_2"/>
</dbReference>
<dbReference type="InterPro" id="IPR009019">
    <property type="entry name" value="KH_sf_prok-type"/>
</dbReference>
<dbReference type="InterPro" id="IPR036419">
    <property type="entry name" value="Ribosomal_S3_C_sf"/>
</dbReference>
<dbReference type="InterPro" id="IPR027488">
    <property type="entry name" value="Ribosomal_uS3_arc"/>
</dbReference>
<dbReference type="InterPro" id="IPR001351">
    <property type="entry name" value="Ribosomal_uS3_C"/>
</dbReference>
<dbReference type="InterPro" id="IPR005703">
    <property type="entry name" value="Ribosomal_uS3_euk/arc"/>
</dbReference>
<dbReference type="NCBIfam" id="NF003219">
    <property type="entry name" value="PRK04191.1"/>
    <property type="match status" value="1"/>
</dbReference>
<dbReference type="NCBIfam" id="TIGR01008">
    <property type="entry name" value="uS3_euk_arch"/>
    <property type="match status" value="1"/>
</dbReference>
<dbReference type="PANTHER" id="PTHR11760">
    <property type="entry name" value="30S/40S RIBOSOMAL PROTEIN S3"/>
    <property type="match status" value="1"/>
</dbReference>
<dbReference type="PANTHER" id="PTHR11760:SF32">
    <property type="entry name" value="SMALL RIBOSOMAL SUBUNIT PROTEIN US3"/>
    <property type="match status" value="1"/>
</dbReference>
<dbReference type="Pfam" id="PF07650">
    <property type="entry name" value="KH_2"/>
    <property type="match status" value="1"/>
</dbReference>
<dbReference type="Pfam" id="PF00189">
    <property type="entry name" value="Ribosomal_S3_C"/>
    <property type="match status" value="1"/>
</dbReference>
<dbReference type="SMART" id="SM00322">
    <property type="entry name" value="KH"/>
    <property type="match status" value="1"/>
</dbReference>
<dbReference type="SUPFAM" id="SSF54814">
    <property type="entry name" value="Prokaryotic type KH domain (KH-domain type II)"/>
    <property type="match status" value="1"/>
</dbReference>
<dbReference type="SUPFAM" id="SSF54821">
    <property type="entry name" value="Ribosomal protein S3 C-terminal domain"/>
    <property type="match status" value="1"/>
</dbReference>
<dbReference type="PROSITE" id="PS50823">
    <property type="entry name" value="KH_TYPE_2"/>
    <property type="match status" value="1"/>
</dbReference>
<name>RS3_METAR</name>
<organism>
    <name type="scientific">Methanocella arvoryzae (strain DSM 22066 / NBRC 105507 / MRE50)</name>
    <dbReference type="NCBI Taxonomy" id="351160"/>
    <lineage>
        <taxon>Archaea</taxon>
        <taxon>Methanobacteriati</taxon>
        <taxon>Methanobacteriota</taxon>
        <taxon>Stenosarchaea group</taxon>
        <taxon>Methanomicrobia</taxon>
        <taxon>Methanocellales</taxon>
        <taxon>Methanocellaceae</taxon>
        <taxon>Methanocella</taxon>
    </lineage>
</organism>
<keyword id="KW-1185">Reference proteome</keyword>
<keyword id="KW-0687">Ribonucleoprotein</keyword>
<keyword id="KW-0689">Ribosomal protein</keyword>
<keyword id="KW-0694">RNA-binding</keyword>
<keyword id="KW-0699">rRNA-binding</keyword>
<proteinExistence type="inferred from homology"/>